<protein>
    <recommendedName>
        <fullName evidence="1">UPF0149 protein PSPA7_5968</fullName>
    </recommendedName>
</protein>
<feature type="chain" id="PRO_1000059829" description="UPF0149 protein PSPA7_5968">
    <location>
        <begin position="1"/>
        <end position="184"/>
    </location>
</feature>
<sequence>MSTQNSAYSAFSSLLAEAALPVSPAELHGHLLGRVCAGAGFDEAAWQHAAAELLGGAPGERLEAALSGLLGMVRQDFSAGEVAVVLLLPDDETPLAQRTEALGQWCQGFLAGFGLTAREGSLTGEAEEVLQDMAAIAQVQGQLEDSEDGETDYMEVMEYLRVAPLLLFAECGKPLEPAPKPSLH</sequence>
<reference key="1">
    <citation type="submission" date="2007-06" db="EMBL/GenBank/DDBJ databases">
        <authorList>
            <person name="Dodson R.J."/>
            <person name="Harkins D."/>
            <person name="Paulsen I.T."/>
        </authorList>
    </citation>
    <scope>NUCLEOTIDE SEQUENCE [LARGE SCALE GENOMIC DNA]</scope>
    <source>
        <strain>DSM 24068 / PA7</strain>
    </source>
</reference>
<organism>
    <name type="scientific">Pseudomonas paraeruginosa (strain DSM 24068 / PA7)</name>
    <name type="common">Pseudomonas aeruginosa (strain PA7)</name>
    <dbReference type="NCBI Taxonomy" id="381754"/>
    <lineage>
        <taxon>Bacteria</taxon>
        <taxon>Pseudomonadati</taxon>
        <taxon>Pseudomonadota</taxon>
        <taxon>Gammaproteobacteria</taxon>
        <taxon>Pseudomonadales</taxon>
        <taxon>Pseudomonadaceae</taxon>
        <taxon>Pseudomonas</taxon>
        <taxon>Pseudomonas paraeruginosa</taxon>
    </lineage>
</organism>
<accession>A6VDZ9</accession>
<proteinExistence type="inferred from homology"/>
<name>Y5968_PSEP7</name>
<evidence type="ECO:0000255" key="1">
    <source>
        <dbReference type="HAMAP-Rule" id="MF_00346"/>
    </source>
</evidence>
<gene>
    <name type="ordered locus">PSPA7_5968</name>
</gene>
<dbReference type="EMBL" id="CP000744">
    <property type="protein sequence ID" value="ABR81046.1"/>
    <property type="molecule type" value="Genomic_DNA"/>
</dbReference>
<dbReference type="RefSeq" id="WP_012077847.1">
    <property type="nucleotide sequence ID" value="NC_009656.1"/>
</dbReference>
<dbReference type="SMR" id="A6VDZ9"/>
<dbReference type="GeneID" id="77223757"/>
<dbReference type="KEGG" id="pap:PSPA7_5968"/>
<dbReference type="HOGENOM" id="CLU_085336_0_0_6"/>
<dbReference type="Proteomes" id="UP000001582">
    <property type="component" value="Chromosome"/>
</dbReference>
<dbReference type="GO" id="GO:0005829">
    <property type="term" value="C:cytosol"/>
    <property type="evidence" value="ECO:0007669"/>
    <property type="project" value="TreeGrafter"/>
</dbReference>
<dbReference type="Gene3D" id="1.20.120.740">
    <property type="entry name" value="YgfB uncharacterised protein family UPF0149, PF03695"/>
    <property type="match status" value="1"/>
</dbReference>
<dbReference type="HAMAP" id="MF_00346">
    <property type="entry name" value="UPF0149"/>
    <property type="match status" value="1"/>
</dbReference>
<dbReference type="InterPro" id="IPR011978">
    <property type="entry name" value="YgfB-like"/>
</dbReference>
<dbReference type="InterPro" id="IPR036255">
    <property type="entry name" value="YgfB-like_sf"/>
</dbReference>
<dbReference type="NCBIfam" id="NF002562">
    <property type="entry name" value="PRK02166.1"/>
    <property type="match status" value="1"/>
</dbReference>
<dbReference type="PANTHER" id="PTHR37528">
    <property type="entry name" value="UPF0149 PROTEIN YGFB"/>
    <property type="match status" value="1"/>
</dbReference>
<dbReference type="PANTHER" id="PTHR37528:SF1">
    <property type="entry name" value="UPF0149 PROTEIN YGFB"/>
    <property type="match status" value="1"/>
</dbReference>
<dbReference type="Pfam" id="PF03695">
    <property type="entry name" value="UPF0149"/>
    <property type="match status" value="1"/>
</dbReference>
<dbReference type="SUPFAM" id="SSF101327">
    <property type="entry name" value="YgfB-like"/>
    <property type="match status" value="1"/>
</dbReference>
<comment type="similarity">
    <text evidence="1">Belongs to the UPF0149 family.</text>
</comment>